<comment type="function">
    <text evidence="1">Catalyzes the reversible adenylation of nicotinate mononucleotide (NaMN) to nicotinic acid adenine dinucleotide (NaAD).</text>
</comment>
<comment type="catalytic activity">
    <reaction evidence="1">
        <text>nicotinate beta-D-ribonucleotide + ATP + H(+) = deamido-NAD(+) + diphosphate</text>
        <dbReference type="Rhea" id="RHEA:22860"/>
        <dbReference type="ChEBI" id="CHEBI:15378"/>
        <dbReference type="ChEBI" id="CHEBI:30616"/>
        <dbReference type="ChEBI" id="CHEBI:33019"/>
        <dbReference type="ChEBI" id="CHEBI:57502"/>
        <dbReference type="ChEBI" id="CHEBI:58437"/>
        <dbReference type="EC" id="2.7.7.18"/>
    </reaction>
</comment>
<comment type="pathway">
    <text evidence="1">Cofactor biosynthesis; NAD(+) biosynthesis; deamido-NAD(+) from nicotinate D-ribonucleotide: step 1/1.</text>
</comment>
<comment type="similarity">
    <text evidence="1">Belongs to the NadD family.</text>
</comment>
<accession>Q830B9</accession>
<organism>
    <name type="scientific">Enterococcus faecalis (strain ATCC 700802 / V583)</name>
    <dbReference type="NCBI Taxonomy" id="226185"/>
    <lineage>
        <taxon>Bacteria</taxon>
        <taxon>Bacillati</taxon>
        <taxon>Bacillota</taxon>
        <taxon>Bacilli</taxon>
        <taxon>Lactobacillales</taxon>
        <taxon>Enterococcaceae</taxon>
        <taxon>Enterococcus</taxon>
    </lineage>
</organism>
<reference key="1">
    <citation type="journal article" date="2003" name="Science">
        <title>Role of mobile DNA in the evolution of vancomycin-resistant Enterococcus faecalis.</title>
        <authorList>
            <person name="Paulsen I.T."/>
            <person name="Banerjei L."/>
            <person name="Myers G.S.A."/>
            <person name="Nelson K.E."/>
            <person name="Seshadri R."/>
            <person name="Read T.D."/>
            <person name="Fouts D.E."/>
            <person name="Eisen J.A."/>
            <person name="Gill S.R."/>
            <person name="Heidelberg J.F."/>
            <person name="Tettelin H."/>
            <person name="Dodson R.J."/>
            <person name="Umayam L.A."/>
            <person name="Brinkac L.M."/>
            <person name="Beanan M.J."/>
            <person name="Daugherty S.C."/>
            <person name="DeBoy R.T."/>
            <person name="Durkin S.A."/>
            <person name="Kolonay J.F."/>
            <person name="Madupu R."/>
            <person name="Nelson W.C."/>
            <person name="Vamathevan J.J."/>
            <person name="Tran B."/>
            <person name="Upton J."/>
            <person name="Hansen T."/>
            <person name="Shetty J."/>
            <person name="Khouri H.M."/>
            <person name="Utterback T.R."/>
            <person name="Radune D."/>
            <person name="Ketchum K.A."/>
            <person name="Dougherty B.A."/>
            <person name="Fraser C.M."/>
        </authorList>
    </citation>
    <scope>NUCLEOTIDE SEQUENCE [LARGE SCALE GENOMIC DNA]</scope>
    <source>
        <strain>ATCC 700802 / V583</strain>
    </source>
</reference>
<dbReference type="EC" id="2.7.7.18" evidence="1"/>
<dbReference type="EMBL" id="AE016830">
    <property type="protein sequence ID" value="AAO82561.1"/>
    <property type="molecule type" value="Genomic_DNA"/>
</dbReference>
<dbReference type="RefSeq" id="NP_816491.1">
    <property type="nucleotide sequence ID" value="NC_004668.1"/>
</dbReference>
<dbReference type="RefSeq" id="WP_002365150.1">
    <property type="nucleotide sequence ID" value="NZ_KE136528.1"/>
</dbReference>
<dbReference type="SMR" id="Q830B9"/>
<dbReference type="STRING" id="226185.EF_2871"/>
<dbReference type="EnsemblBacteria" id="AAO82561">
    <property type="protein sequence ID" value="AAO82561"/>
    <property type="gene ID" value="EF_2871"/>
</dbReference>
<dbReference type="KEGG" id="efa:EF2871"/>
<dbReference type="PATRIC" id="fig|226185.45.peg.702"/>
<dbReference type="eggNOG" id="COG1057">
    <property type="taxonomic scope" value="Bacteria"/>
</dbReference>
<dbReference type="HOGENOM" id="CLU_069765_3_1_9"/>
<dbReference type="UniPathway" id="UPA00253">
    <property type="reaction ID" value="UER00332"/>
</dbReference>
<dbReference type="Proteomes" id="UP000001415">
    <property type="component" value="Chromosome"/>
</dbReference>
<dbReference type="GO" id="GO:0005524">
    <property type="term" value="F:ATP binding"/>
    <property type="evidence" value="ECO:0007669"/>
    <property type="project" value="UniProtKB-KW"/>
</dbReference>
<dbReference type="GO" id="GO:0004515">
    <property type="term" value="F:nicotinate-nucleotide adenylyltransferase activity"/>
    <property type="evidence" value="ECO:0007669"/>
    <property type="project" value="UniProtKB-UniRule"/>
</dbReference>
<dbReference type="GO" id="GO:0009435">
    <property type="term" value="P:NAD biosynthetic process"/>
    <property type="evidence" value="ECO:0007669"/>
    <property type="project" value="UniProtKB-UniRule"/>
</dbReference>
<dbReference type="CDD" id="cd02165">
    <property type="entry name" value="NMNAT"/>
    <property type="match status" value="1"/>
</dbReference>
<dbReference type="FunFam" id="3.40.50.620:FF:000079">
    <property type="entry name" value="Probable nicotinate-nucleotide adenylyltransferase"/>
    <property type="match status" value="1"/>
</dbReference>
<dbReference type="Gene3D" id="3.40.50.620">
    <property type="entry name" value="HUPs"/>
    <property type="match status" value="1"/>
</dbReference>
<dbReference type="HAMAP" id="MF_00244">
    <property type="entry name" value="NaMN_adenylyltr"/>
    <property type="match status" value="1"/>
</dbReference>
<dbReference type="InterPro" id="IPR004821">
    <property type="entry name" value="Cyt_trans-like"/>
</dbReference>
<dbReference type="InterPro" id="IPR005248">
    <property type="entry name" value="NadD/NMNAT"/>
</dbReference>
<dbReference type="InterPro" id="IPR014729">
    <property type="entry name" value="Rossmann-like_a/b/a_fold"/>
</dbReference>
<dbReference type="NCBIfam" id="TIGR00482">
    <property type="entry name" value="nicotinate (nicotinamide) nucleotide adenylyltransferase"/>
    <property type="match status" value="1"/>
</dbReference>
<dbReference type="NCBIfam" id="NF000840">
    <property type="entry name" value="PRK00071.1-3"/>
    <property type="match status" value="1"/>
</dbReference>
<dbReference type="NCBIfam" id="NF000841">
    <property type="entry name" value="PRK00071.1-4"/>
    <property type="match status" value="1"/>
</dbReference>
<dbReference type="PANTHER" id="PTHR39321">
    <property type="entry name" value="NICOTINATE-NUCLEOTIDE ADENYLYLTRANSFERASE-RELATED"/>
    <property type="match status" value="1"/>
</dbReference>
<dbReference type="PANTHER" id="PTHR39321:SF3">
    <property type="entry name" value="PHOSPHOPANTETHEINE ADENYLYLTRANSFERASE"/>
    <property type="match status" value="1"/>
</dbReference>
<dbReference type="Pfam" id="PF01467">
    <property type="entry name" value="CTP_transf_like"/>
    <property type="match status" value="1"/>
</dbReference>
<dbReference type="SUPFAM" id="SSF52374">
    <property type="entry name" value="Nucleotidylyl transferase"/>
    <property type="match status" value="1"/>
</dbReference>
<evidence type="ECO:0000255" key="1">
    <source>
        <dbReference type="HAMAP-Rule" id="MF_00244"/>
    </source>
</evidence>
<keyword id="KW-0067">ATP-binding</keyword>
<keyword id="KW-0520">NAD</keyword>
<keyword id="KW-0547">Nucleotide-binding</keyword>
<keyword id="KW-0548">Nucleotidyltransferase</keyword>
<keyword id="KW-0662">Pyridine nucleotide biosynthesis</keyword>
<keyword id="KW-1185">Reference proteome</keyword>
<keyword id="KW-0808">Transferase</keyword>
<name>NADD_ENTFA</name>
<proteinExistence type="inferred from homology"/>
<protein>
    <recommendedName>
        <fullName evidence="1">Probable nicotinate-nucleotide adenylyltransferase</fullName>
        <ecNumber evidence="1">2.7.7.18</ecNumber>
    </recommendedName>
    <alternativeName>
        <fullName evidence="1">Deamido-NAD(+) diphosphorylase</fullName>
    </alternativeName>
    <alternativeName>
        <fullName evidence="1">Deamido-NAD(+) pyrophosphorylase</fullName>
    </alternativeName>
    <alternativeName>
        <fullName evidence="1">Nicotinate mononucleotide adenylyltransferase</fullName>
        <shortName evidence="1">NaMN adenylyltransferase</shortName>
    </alternativeName>
</protein>
<gene>
    <name evidence="1" type="primary">nadD</name>
    <name type="ordered locus">EF_2871</name>
</gene>
<feature type="chain" id="PRO_0000181410" description="Probable nicotinate-nucleotide adenylyltransferase">
    <location>
        <begin position="1"/>
        <end position="219"/>
    </location>
</feature>
<sequence>MGEKRQARQGADVLLQEEPLRFQTRKQVGLLGGNFNPVHLAHLVMADQVQNQLGLDKVYLMPTYLPPHVDEKKTISSEHRLAMLELAVADNPCLDIEPIELIRKGKSYTYDTMKALKEANPDTDYYFIIGGDMVEYLPKWHRIDDLLHLVQFVGIRRPNYPTESTYPIIWVDVPQMAISSTLIRQKVKSGCSTRYLLPENVINYIQEKGLYQDELDNKL</sequence>